<accession>Q9VM60</accession>
<organism>
    <name type="scientific">Drosophila melanogaster</name>
    <name type="common">Fruit fly</name>
    <dbReference type="NCBI Taxonomy" id="7227"/>
    <lineage>
        <taxon>Eukaryota</taxon>
        <taxon>Metazoa</taxon>
        <taxon>Ecdysozoa</taxon>
        <taxon>Arthropoda</taxon>
        <taxon>Hexapoda</taxon>
        <taxon>Insecta</taxon>
        <taxon>Pterygota</taxon>
        <taxon>Neoptera</taxon>
        <taxon>Endopterygota</taxon>
        <taxon>Diptera</taxon>
        <taxon>Brachycera</taxon>
        <taxon>Muscomorpha</taxon>
        <taxon>Ephydroidea</taxon>
        <taxon>Drosophilidae</taxon>
        <taxon>Drosophila</taxon>
        <taxon>Sophophora</taxon>
    </lineage>
</organism>
<gene>
    <name type="ORF">CG3430</name>
</gene>
<name>MCMBP_DROME</name>
<protein>
    <recommendedName>
        <fullName>Mini-chromosome maintenance complex-binding protein</fullName>
        <shortName>MCM-BP</shortName>
        <shortName>MCM-binding protein</shortName>
    </recommendedName>
</protein>
<keyword id="KW-0131">Cell cycle</keyword>
<keyword id="KW-0132">Cell division</keyword>
<keyword id="KW-0235">DNA replication</keyword>
<keyword id="KW-0498">Mitosis</keyword>
<keyword id="KW-0539">Nucleus</keyword>
<keyword id="KW-0597">Phosphoprotein</keyword>
<keyword id="KW-1185">Reference proteome</keyword>
<feature type="chain" id="PRO_0000405813" description="Mini-chromosome maintenance complex-binding protein">
    <location>
        <begin position="1"/>
        <end position="605"/>
    </location>
</feature>
<feature type="modified residue" description="Phosphoserine" evidence="2">
    <location>
        <position position="147"/>
    </location>
</feature>
<feature type="modified residue" description="Phosphoserine" evidence="2">
    <location>
        <position position="150"/>
    </location>
</feature>
<sequence length="605" mass="68017">MPCAMELPSTPDELAAQQADSAALKDLLKDPSRWHSIPLLNYTPLHKLKDQTLVRFRGMIQDMMDPEIYLERYEVKSADGSKRVQEGKYRDCLKIANGEVIDYNADGNVHGERRTMFVVSVPGLNDWSKEHEKLCCPQIDLASLGQSPSSAKKRTIVGEEEAMDVDVASETTFKRPCLKEIQKDSEPVGASKSSVLGSDYLINSPLPDRPSMACMVKVYEEFDTYQLNSLVDFVGFLSVDASLDAATLEIDDCENLSELQAAHPSPFLIPRLHAFGVQVLPHANPLLDKSLRQPTEICEETYPTHLAVHKDLRMLLKLCLFDDDLAAEYLLSHLISTVYSRSEMQSIGKFALNLCNLPKNCEAYATKLYQILELLLPASHYMPMTLVTLNTAAFAPKKDYETNKLVSGVLQLAPHTHLVLDETCMQQGKLEANGVHAVQHLAHLINNQELKCDFQYYQIDYQANIPVLVLSEGRSMLPSDFVLPINADSKAVELVDESLKAAHHYLQPSRLQQFRKYLTTARTSGFNVSEEHTEMIQQDFVDMRKANVKSNADDLHGLLVLSRLLGIARGKDTLDKETWQLATEFEAKRRQRIQSLPKSSAQLRN</sequence>
<reference key="1">
    <citation type="journal article" date="2000" name="Science">
        <title>The genome sequence of Drosophila melanogaster.</title>
        <authorList>
            <person name="Adams M.D."/>
            <person name="Celniker S.E."/>
            <person name="Holt R.A."/>
            <person name="Evans C.A."/>
            <person name="Gocayne J.D."/>
            <person name="Amanatides P.G."/>
            <person name="Scherer S.E."/>
            <person name="Li P.W."/>
            <person name="Hoskins R.A."/>
            <person name="Galle R.F."/>
            <person name="George R.A."/>
            <person name="Lewis S.E."/>
            <person name="Richards S."/>
            <person name="Ashburner M."/>
            <person name="Henderson S.N."/>
            <person name="Sutton G.G."/>
            <person name="Wortman J.R."/>
            <person name="Yandell M.D."/>
            <person name="Zhang Q."/>
            <person name="Chen L.X."/>
            <person name="Brandon R.C."/>
            <person name="Rogers Y.-H.C."/>
            <person name="Blazej R.G."/>
            <person name="Champe M."/>
            <person name="Pfeiffer B.D."/>
            <person name="Wan K.H."/>
            <person name="Doyle C."/>
            <person name="Baxter E.G."/>
            <person name="Helt G."/>
            <person name="Nelson C.R."/>
            <person name="Miklos G.L.G."/>
            <person name="Abril J.F."/>
            <person name="Agbayani A."/>
            <person name="An H.-J."/>
            <person name="Andrews-Pfannkoch C."/>
            <person name="Baldwin D."/>
            <person name="Ballew R.M."/>
            <person name="Basu A."/>
            <person name="Baxendale J."/>
            <person name="Bayraktaroglu L."/>
            <person name="Beasley E.M."/>
            <person name="Beeson K.Y."/>
            <person name="Benos P.V."/>
            <person name="Berman B.P."/>
            <person name="Bhandari D."/>
            <person name="Bolshakov S."/>
            <person name="Borkova D."/>
            <person name="Botchan M.R."/>
            <person name="Bouck J."/>
            <person name="Brokstein P."/>
            <person name="Brottier P."/>
            <person name="Burtis K.C."/>
            <person name="Busam D.A."/>
            <person name="Butler H."/>
            <person name="Cadieu E."/>
            <person name="Center A."/>
            <person name="Chandra I."/>
            <person name="Cherry J.M."/>
            <person name="Cawley S."/>
            <person name="Dahlke C."/>
            <person name="Davenport L.B."/>
            <person name="Davies P."/>
            <person name="de Pablos B."/>
            <person name="Delcher A."/>
            <person name="Deng Z."/>
            <person name="Mays A.D."/>
            <person name="Dew I."/>
            <person name="Dietz S.M."/>
            <person name="Dodson K."/>
            <person name="Doup L.E."/>
            <person name="Downes M."/>
            <person name="Dugan-Rocha S."/>
            <person name="Dunkov B.C."/>
            <person name="Dunn P."/>
            <person name="Durbin K.J."/>
            <person name="Evangelista C.C."/>
            <person name="Ferraz C."/>
            <person name="Ferriera S."/>
            <person name="Fleischmann W."/>
            <person name="Fosler C."/>
            <person name="Gabrielian A.E."/>
            <person name="Garg N.S."/>
            <person name="Gelbart W.M."/>
            <person name="Glasser K."/>
            <person name="Glodek A."/>
            <person name="Gong F."/>
            <person name="Gorrell J.H."/>
            <person name="Gu Z."/>
            <person name="Guan P."/>
            <person name="Harris M."/>
            <person name="Harris N.L."/>
            <person name="Harvey D.A."/>
            <person name="Heiman T.J."/>
            <person name="Hernandez J.R."/>
            <person name="Houck J."/>
            <person name="Hostin D."/>
            <person name="Houston K.A."/>
            <person name="Howland T.J."/>
            <person name="Wei M.-H."/>
            <person name="Ibegwam C."/>
            <person name="Jalali M."/>
            <person name="Kalush F."/>
            <person name="Karpen G.H."/>
            <person name="Ke Z."/>
            <person name="Kennison J.A."/>
            <person name="Ketchum K.A."/>
            <person name="Kimmel B.E."/>
            <person name="Kodira C.D."/>
            <person name="Kraft C.L."/>
            <person name="Kravitz S."/>
            <person name="Kulp D."/>
            <person name="Lai Z."/>
            <person name="Lasko P."/>
            <person name="Lei Y."/>
            <person name="Levitsky A.A."/>
            <person name="Li J.H."/>
            <person name="Li Z."/>
            <person name="Liang Y."/>
            <person name="Lin X."/>
            <person name="Liu X."/>
            <person name="Mattei B."/>
            <person name="McIntosh T.C."/>
            <person name="McLeod M.P."/>
            <person name="McPherson D."/>
            <person name="Merkulov G."/>
            <person name="Milshina N.V."/>
            <person name="Mobarry C."/>
            <person name="Morris J."/>
            <person name="Moshrefi A."/>
            <person name="Mount S.M."/>
            <person name="Moy M."/>
            <person name="Murphy B."/>
            <person name="Murphy L."/>
            <person name="Muzny D.M."/>
            <person name="Nelson D.L."/>
            <person name="Nelson D.R."/>
            <person name="Nelson K.A."/>
            <person name="Nixon K."/>
            <person name="Nusskern D.R."/>
            <person name="Pacleb J.M."/>
            <person name="Palazzolo M."/>
            <person name="Pittman G.S."/>
            <person name="Pan S."/>
            <person name="Pollard J."/>
            <person name="Puri V."/>
            <person name="Reese M.G."/>
            <person name="Reinert K."/>
            <person name="Remington K."/>
            <person name="Saunders R.D.C."/>
            <person name="Scheeler F."/>
            <person name="Shen H."/>
            <person name="Shue B.C."/>
            <person name="Siden-Kiamos I."/>
            <person name="Simpson M."/>
            <person name="Skupski M.P."/>
            <person name="Smith T.J."/>
            <person name="Spier E."/>
            <person name="Spradling A.C."/>
            <person name="Stapleton M."/>
            <person name="Strong R."/>
            <person name="Sun E."/>
            <person name="Svirskas R."/>
            <person name="Tector C."/>
            <person name="Turner R."/>
            <person name="Venter E."/>
            <person name="Wang A.H."/>
            <person name="Wang X."/>
            <person name="Wang Z.-Y."/>
            <person name="Wassarman D.A."/>
            <person name="Weinstock G.M."/>
            <person name="Weissenbach J."/>
            <person name="Williams S.M."/>
            <person name="Woodage T."/>
            <person name="Worley K.C."/>
            <person name="Wu D."/>
            <person name="Yang S."/>
            <person name="Yao Q.A."/>
            <person name="Ye J."/>
            <person name="Yeh R.-F."/>
            <person name="Zaveri J.S."/>
            <person name="Zhan M."/>
            <person name="Zhang G."/>
            <person name="Zhao Q."/>
            <person name="Zheng L."/>
            <person name="Zheng X.H."/>
            <person name="Zhong F.N."/>
            <person name="Zhong W."/>
            <person name="Zhou X."/>
            <person name="Zhu S.C."/>
            <person name="Zhu X."/>
            <person name="Smith H.O."/>
            <person name="Gibbs R.A."/>
            <person name="Myers E.W."/>
            <person name="Rubin G.M."/>
            <person name="Venter J.C."/>
        </authorList>
    </citation>
    <scope>NUCLEOTIDE SEQUENCE [LARGE SCALE GENOMIC DNA]</scope>
    <source>
        <strain>Berkeley</strain>
    </source>
</reference>
<reference key="2">
    <citation type="journal article" date="2002" name="Genome Biol.">
        <title>Annotation of the Drosophila melanogaster euchromatic genome: a systematic review.</title>
        <authorList>
            <person name="Misra S."/>
            <person name="Crosby M.A."/>
            <person name="Mungall C.J."/>
            <person name="Matthews B.B."/>
            <person name="Campbell K.S."/>
            <person name="Hradecky P."/>
            <person name="Huang Y."/>
            <person name="Kaminker J.S."/>
            <person name="Millburn G.H."/>
            <person name="Prochnik S.E."/>
            <person name="Smith C.D."/>
            <person name="Tupy J.L."/>
            <person name="Whitfield E.J."/>
            <person name="Bayraktaroglu L."/>
            <person name="Berman B.P."/>
            <person name="Bettencourt B.R."/>
            <person name="Celniker S.E."/>
            <person name="de Grey A.D.N.J."/>
            <person name="Drysdale R.A."/>
            <person name="Harris N.L."/>
            <person name="Richter J."/>
            <person name="Russo S."/>
            <person name="Schroeder A.J."/>
            <person name="Shu S.Q."/>
            <person name="Stapleton M."/>
            <person name="Yamada C."/>
            <person name="Ashburner M."/>
            <person name="Gelbart W.M."/>
            <person name="Rubin G.M."/>
            <person name="Lewis S.E."/>
        </authorList>
    </citation>
    <scope>GENOME REANNOTATION</scope>
    <source>
        <strain>Berkeley</strain>
    </source>
</reference>
<reference key="3">
    <citation type="journal article" date="2002" name="Genome Biol.">
        <title>A Drosophila full-length cDNA resource.</title>
        <authorList>
            <person name="Stapleton M."/>
            <person name="Carlson J.W."/>
            <person name="Brokstein P."/>
            <person name="Yu C."/>
            <person name="Champe M."/>
            <person name="George R.A."/>
            <person name="Guarin H."/>
            <person name="Kronmiller B."/>
            <person name="Pacleb J.M."/>
            <person name="Park S."/>
            <person name="Wan K.H."/>
            <person name="Rubin G.M."/>
            <person name="Celniker S.E."/>
        </authorList>
    </citation>
    <scope>NUCLEOTIDE SEQUENCE [LARGE SCALE MRNA]</scope>
    <source>
        <strain>Berkeley</strain>
        <tissue>Embryo</tissue>
    </source>
</reference>
<reference key="4">
    <citation type="journal article" date="2008" name="J. Proteome Res.">
        <title>Phosphoproteome analysis of Drosophila melanogaster embryos.</title>
        <authorList>
            <person name="Zhai B."/>
            <person name="Villen J."/>
            <person name="Beausoleil S.A."/>
            <person name="Mintseris J."/>
            <person name="Gygi S.P."/>
        </authorList>
    </citation>
    <scope>PHOSPHORYLATION [LARGE SCALE ANALYSIS] AT SER-147 AND SER-150</scope>
    <scope>IDENTIFICATION BY MASS SPECTROMETRY</scope>
    <source>
        <tissue>Embryo</tissue>
    </source>
</reference>
<proteinExistence type="evidence at protein level"/>
<comment type="function">
    <text evidence="1">Associated component of the MCM complex that acts as a regulator of DNA replication. Binds to the MCM complex during late S phase and may act by promoting the disassembly of the MCM complex from chromatin (By similarity).</text>
</comment>
<comment type="subunit">
    <text evidence="1">Interacts with the MCM complex.</text>
</comment>
<comment type="subcellular location">
    <subcellularLocation>
        <location evidence="1">Nucleus</location>
    </subcellularLocation>
</comment>
<comment type="similarity">
    <text evidence="3">Belongs to the MCMBP family.</text>
</comment>
<evidence type="ECO:0000250" key="1"/>
<evidence type="ECO:0000269" key="2">
    <source>
    </source>
</evidence>
<evidence type="ECO:0000305" key="3"/>
<dbReference type="EMBL" id="AE014134">
    <property type="protein sequence ID" value="AAF52465.1"/>
    <property type="molecule type" value="Genomic_DNA"/>
</dbReference>
<dbReference type="EMBL" id="AY069585">
    <property type="protein sequence ID" value="AAL39730.1"/>
    <property type="molecule type" value="mRNA"/>
</dbReference>
<dbReference type="RefSeq" id="NP_542438.1">
    <property type="nucleotide sequence ID" value="NM_080707.4"/>
</dbReference>
<dbReference type="SMR" id="Q9VM60"/>
<dbReference type="BioGRID" id="60126">
    <property type="interactions" value="5"/>
</dbReference>
<dbReference type="FunCoup" id="Q9VM60">
    <property type="interactions" value="2330"/>
</dbReference>
<dbReference type="IntAct" id="Q9VM60">
    <property type="interactions" value="2"/>
</dbReference>
<dbReference type="STRING" id="7227.FBpp0078978"/>
<dbReference type="iPTMnet" id="Q9VM60"/>
<dbReference type="PaxDb" id="7227-FBpp0078978"/>
<dbReference type="DNASU" id="33976"/>
<dbReference type="EnsemblMetazoa" id="FBtr0079350">
    <property type="protein sequence ID" value="FBpp0078978"/>
    <property type="gene ID" value="FBgn0031875"/>
</dbReference>
<dbReference type="GeneID" id="33976"/>
<dbReference type="KEGG" id="dme:Dmel_CG3430"/>
<dbReference type="UCSC" id="CG3430-RA">
    <property type="organism name" value="d. melanogaster"/>
</dbReference>
<dbReference type="AGR" id="FB:FBgn0031875"/>
<dbReference type="FlyBase" id="FBgn0031875">
    <property type="gene designation" value="CG3430"/>
</dbReference>
<dbReference type="VEuPathDB" id="VectorBase:FBgn0031875"/>
<dbReference type="eggNOG" id="KOG2545">
    <property type="taxonomic scope" value="Eukaryota"/>
</dbReference>
<dbReference type="GeneTree" id="ENSGT00390000017265"/>
<dbReference type="HOGENOM" id="CLU_029811_0_0_1"/>
<dbReference type="InParanoid" id="Q9VM60"/>
<dbReference type="OMA" id="EEHTEMI"/>
<dbReference type="OrthoDB" id="329666at2759"/>
<dbReference type="PhylomeDB" id="Q9VM60"/>
<dbReference type="BioGRID-ORCS" id="33976">
    <property type="hits" value="0 hits in 1 CRISPR screen"/>
</dbReference>
<dbReference type="GenomeRNAi" id="33976"/>
<dbReference type="PRO" id="PR:Q9VM60"/>
<dbReference type="Proteomes" id="UP000000803">
    <property type="component" value="Chromosome 2L"/>
</dbReference>
<dbReference type="Bgee" id="FBgn0031875">
    <property type="expression patterns" value="Expressed in secondary oocyte and 39 other cell types or tissues"/>
</dbReference>
<dbReference type="GO" id="GO:0005634">
    <property type="term" value="C:nucleus"/>
    <property type="evidence" value="ECO:0007669"/>
    <property type="project" value="UniProtKB-SubCell"/>
</dbReference>
<dbReference type="GO" id="GO:0003682">
    <property type="term" value="F:chromatin binding"/>
    <property type="evidence" value="ECO:0000318"/>
    <property type="project" value="GO_Central"/>
</dbReference>
<dbReference type="GO" id="GO:0051301">
    <property type="term" value="P:cell division"/>
    <property type="evidence" value="ECO:0007669"/>
    <property type="project" value="UniProtKB-KW"/>
</dbReference>
<dbReference type="GO" id="GO:0006261">
    <property type="term" value="P:DNA-templated DNA replication"/>
    <property type="evidence" value="ECO:0000318"/>
    <property type="project" value="GO_Central"/>
</dbReference>
<dbReference type="InterPro" id="IPR019140">
    <property type="entry name" value="MCM_complex-bd"/>
</dbReference>
<dbReference type="PANTHER" id="PTHR13489">
    <property type="entry name" value="MINI-CHROMOSOME MAINTENANCE COMPLEX-BINDING PROTEIN"/>
    <property type="match status" value="1"/>
</dbReference>
<dbReference type="PANTHER" id="PTHR13489:SF0">
    <property type="entry name" value="MINI-CHROMOSOME MAINTENANCE COMPLEX-BINDING PROTEIN"/>
    <property type="match status" value="1"/>
</dbReference>
<dbReference type="Pfam" id="PF09739">
    <property type="entry name" value="MCM_bind"/>
    <property type="match status" value="1"/>
</dbReference>